<gene>
    <name evidence="1" type="primary">ureA</name>
    <name type="ordered locus">Bsph_2699</name>
</gene>
<reference key="1">
    <citation type="journal article" date="2008" name="J. Bacteriol.">
        <title>Complete genome sequence of the mosquitocidal bacterium Bacillus sphaericus C3-41 and comparison with those of closely related Bacillus species.</title>
        <authorList>
            <person name="Hu X."/>
            <person name="Fan W."/>
            <person name="Han B."/>
            <person name="Liu H."/>
            <person name="Zheng D."/>
            <person name="Li Q."/>
            <person name="Dong W."/>
            <person name="Yan J."/>
            <person name="Gao M."/>
            <person name="Berry C."/>
            <person name="Yuan Z."/>
        </authorList>
    </citation>
    <scope>NUCLEOTIDE SEQUENCE [LARGE SCALE GENOMIC DNA]</scope>
    <source>
        <strain>C3-41</strain>
    </source>
</reference>
<accession>B1HZE2</accession>
<keyword id="KW-0963">Cytoplasm</keyword>
<keyword id="KW-0378">Hydrolase</keyword>
<sequence length="100" mass="10930">MKLSPVEQEKLLLHVAGELALKRKARGLKLNYPEAVALISSFIMEGARDGKTVAQLMSEAKHVLTAEDVMEGVGDMISDVQVECTFPDGTKLVTVHRPIQ</sequence>
<feature type="chain" id="PRO_1000199869" description="Urease subunit gamma">
    <location>
        <begin position="1"/>
        <end position="100"/>
    </location>
</feature>
<comment type="catalytic activity">
    <reaction evidence="1">
        <text>urea + 2 H2O + H(+) = hydrogencarbonate + 2 NH4(+)</text>
        <dbReference type="Rhea" id="RHEA:20557"/>
        <dbReference type="ChEBI" id="CHEBI:15377"/>
        <dbReference type="ChEBI" id="CHEBI:15378"/>
        <dbReference type="ChEBI" id="CHEBI:16199"/>
        <dbReference type="ChEBI" id="CHEBI:17544"/>
        <dbReference type="ChEBI" id="CHEBI:28938"/>
        <dbReference type="EC" id="3.5.1.5"/>
    </reaction>
</comment>
<comment type="pathway">
    <text evidence="1">Nitrogen metabolism; urea degradation; CO(2) and NH(3) from urea (urease route): step 1/1.</text>
</comment>
<comment type="subunit">
    <text evidence="1">Heterotrimer of UreA (gamma), UreB (beta) and UreC (alpha) subunits. Three heterotrimers associate to form the active enzyme.</text>
</comment>
<comment type="subcellular location">
    <subcellularLocation>
        <location evidence="1">Cytoplasm</location>
    </subcellularLocation>
</comment>
<comment type="similarity">
    <text evidence="1">Belongs to the urease gamma subunit family.</text>
</comment>
<name>URE3_LYSSC</name>
<dbReference type="EC" id="3.5.1.5" evidence="1"/>
<dbReference type="EMBL" id="CP000817">
    <property type="protein sequence ID" value="ACA40239.1"/>
    <property type="molecule type" value="Genomic_DNA"/>
</dbReference>
<dbReference type="RefSeq" id="WP_012294325.1">
    <property type="nucleotide sequence ID" value="NC_010382.1"/>
</dbReference>
<dbReference type="SMR" id="B1HZE2"/>
<dbReference type="EnsemblBacteria" id="ACA40239">
    <property type="protein sequence ID" value="ACA40239"/>
    <property type="gene ID" value="Bsph_2699"/>
</dbReference>
<dbReference type="GeneID" id="29441401"/>
<dbReference type="KEGG" id="lsp:Bsph_2699"/>
<dbReference type="HOGENOM" id="CLU_145825_1_0_9"/>
<dbReference type="UniPathway" id="UPA00258">
    <property type="reaction ID" value="UER00370"/>
</dbReference>
<dbReference type="Proteomes" id="UP000002164">
    <property type="component" value="Chromosome"/>
</dbReference>
<dbReference type="GO" id="GO:0005737">
    <property type="term" value="C:cytoplasm"/>
    <property type="evidence" value="ECO:0007669"/>
    <property type="project" value="UniProtKB-SubCell"/>
</dbReference>
<dbReference type="GO" id="GO:0016151">
    <property type="term" value="F:nickel cation binding"/>
    <property type="evidence" value="ECO:0007669"/>
    <property type="project" value="InterPro"/>
</dbReference>
<dbReference type="GO" id="GO:0009039">
    <property type="term" value="F:urease activity"/>
    <property type="evidence" value="ECO:0007669"/>
    <property type="project" value="UniProtKB-UniRule"/>
</dbReference>
<dbReference type="GO" id="GO:0043419">
    <property type="term" value="P:urea catabolic process"/>
    <property type="evidence" value="ECO:0007669"/>
    <property type="project" value="UniProtKB-UniRule"/>
</dbReference>
<dbReference type="CDD" id="cd00390">
    <property type="entry name" value="Urease_gamma"/>
    <property type="match status" value="1"/>
</dbReference>
<dbReference type="Gene3D" id="3.30.280.10">
    <property type="entry name" value="Urease, gamma-like subunit"/>
    <property type="match status" value="1"/>
</dbReference>
<dbReference type="HAMAP" id="MF_00739">
    <property type="entry name" value="Urease_gamma"/>
    <property type="match status" value="1"/>
</dbReference>
<dbReference type="InterPro" id="IPR012010">
    <property type="entry name" value="Urease_gamma"/>
</dbReference>
<dbReference type="InterPro" id="IPR002026">
    <property type="entry name" value="Urease_gamma/gamma-beta_su"/>
</dbReference>
<dbReference type="InterPro" id="IPR036463">
    <property type="entry name" value="Urease_gamma_sf"/>
</dbReference>
<dbReference type="InterPro" id="IPR050069">
    <property type="entry name" value="Urease_subunit"/>
</dbReference>
<dbReference type="NCBIfam" id="NF009712">
    <property type="entry name" value="PRK13241.1"/>
    <property type="match status" value="1"/>
</dbReference>
<dbReference type="NCBIfam" id="TIGR00193">
    <property type="entry name" value="urease_gam"/>
    <property type="match status" value="1"/>
</dbReference>
<dbReference type="PANTHER" id="PTHR33569">
    <property type="entry name" value="UREASE"/>
    <property type="match status" value="1"/>
</dbReference>
<dbReference type="PANTHER" id="PTHR33569:SF1">
    <property type="entry name" value="UREASE"/>
    <property type="match status" value="1"/>
</dbReference>
<dbReference type="Pfam" id="PF00547">
    <property type="entry name" value="Urease_gamma"/>
    <property type="match status" value="1"/>
</dbReference>
<dbReference type="PIRSF" id="PIRSF001223">
    <property type="entry name" value="Urease_gamma"/>
    <property type="match status" value="1"/>
</dbReference>
<dbReference type="SUPFAM" id="SSF54111">
    <property type="entry name" value="Urease, gamma-subunit"/>
    <property type="match status" value="1"/>
</dbReference>
<proteinExistence type="inferred from homology"/>
<organism>
    <name type="scientific">Lysinibacillus sphaericus (strain C3-41)</name>
    <dbReference type="NCBI Taxonomy" id="444177"/>
    <lineage>
        <taxon>Bacteria</taxon>
        <taxon>Bacillati</taxon>
        <taxon>Bacillota</taxon>
        <taxon>Bacilli</taxon>
        <taxon>Bacillales</taxon>
        <taxon>Bacillaceae</taxon>
        <taxon>Lysinibacillus</taxon>
    </lineage>
</organism>
<protein>
    <recommendedName>
        <fullName evidence="1">Urease subunit gamma</fullName>
        <ecNumber evidence="1">3.5.1.5</ecNumber>
    </recommendedName>
    <alternativeName>
        <fullName evidence="1">Urea amidohydrolase subunit gamma</fullName>
    </alternativeName>
</protein>
<evidence type="ECO:0000255" key="1">
    <source>
        <dbReference type="HAMAP-Rule" id="MF_00739"/>
    </source>
</evidence>